<sequence length="739" mass="81374">MSVSESAVFAYESSVHSTNVLLSLNDQRKKDVLCDVTVLVEGQRFRAHRSVLAACSSYFHSRIVGQTDAELTVTLPEEVTVKGFEPLIQFAYTAKLILSKDNVDEVCRCVEFLSVHNIEESCFQFLKFKFLDSTSEQQECARKKCFSSHCQKADFKFSFSEQKDLEIDEADEFLEKKRVQTPQCDSRRCQGSVKASPPLQDSVSQACQSLCTDKDGALALPSLCPKYRKFQKAFGTDKIRTLESGVRDVHTASVQPNETSELECFGGAQGCADLHVILKCEGMKAAMESEDTEGQDPSPQCPAEQPQGTPLPQDSAGPHGLYSLSALHTYEQSGDVAFAGVQSKTVKTEKPLSRPDAQDEKPSENQDLYLKSSMGPKEDSSSLASEDRSSVEREVAEHLAKGFWSDICSTDSPCQMQLSPTVAKDGPEQGYSQRRSECPWLGIRISESPEPGQRTFTTLSSVNCPFISTLSSEGCSSNLEIGNYDYVSEPQQEPCPYACVISLGDDSETDTEGDSESCSAREQDCEVKLPFNAQRIISLSRNDFQSLLKMHKLTPEQLDCIHDIRRRSKNRIAAQRCRKRKLDCIQNLESEIEKLQSEKESLLKERDHILSTLGETKQNLTGLCQQVCKEAALSPEQIQILAKYSASDCPLSFLISEKGKSTPDGELAFTSVFSVSDVPPTAPPPCGRGSSAASQELVQESPPTTAAAPEQATLLEPCRQSAGISDFCQQMSDKCTTDE</sequence>
<organism>
    <name type="scientific">Mus musculus</name>
    <name type="common">Mouse</name>
    <dbReference type="NCBI Taxonomy" id="10090"/>
    <lineage>
        <taxon>Eukaryota</taxon>
        <taxon>Metazoa</taxon>
        <taxon>Chordata</taxon>
        <taxon>Craniata</taxon>
        <taxon>Vertebrata</taxon>
        <taxon>Euteleostomi</taxon>
        <taxon>Mammalia</taxon>
        <taxon>Eutheria</taxon>
        <taxon>Euarchontoglires</taxon>
        <taxon>Glires</taxon>
        <taxon>Rodentia</taxon>
        <taxon>Myomorpha</taxon>
        <taxon>Muroidea</taxon>
        <taxon>Muridae</taxon>
        <taxon>Murinae</taxon>
        <taxon>Mus</taxon>
        <taxon>Mus</taxon>
    </lineage>
</organism>
<evidence type="ECO:0000250" key="1">
    <source>
        <dbReference type="UniProtKB" id="O14867"/>
    </source>
</evidence>
<evidence type="ECO:0000255" key="2">
    <source>
        <dbReference type="PROSITE-ProRule" id="PRU00037"/>
    </source>
</evidence>
<evidence type="ECO:0000255" key="3">
    <source>
        <dbReference type="PROSITE-ProRule" id="PRU00978"/>
    </source>
</evidence>
<evidence type="ECO:0000256" key="4">
    <source>
        <dbReference type="SAM" id="MobiDB-lite"/>
    </source>
</evidence>
<evidence type="ECO:0000269" key="5">
    <source>
    </source>
</evidence>
<evidence type="ECO:0000269" key="6">
    <source>
    </source>
</evidence>
<evidence type="ECO:0000305" key="7"/>
<evidence type="ECO:0007744" key="8">
    <source>
    </source>
</evidence>
<evidence type="ECO:0007829" key="9">
    <source>
        <dbReference type="PDB" id="2Z8H"/>
    </source>
</evidence>
<accession>P97302</accession>
<name>BACH1_MOUSE</name>
<comment type="function">
    <text evidence="1 5 6">Transcriptional regulator that acts as a repressor or activator, depending on the context (PubMed:19170764, PubMed:8887638). Binds to NF-E2 DNA binding sites (PubMed:19170764, PubMed:8887638). Plays important roles in coordinating transcription activation and repression by MAFK (PubMed:8887638). Together with MAF, represses the transcription of genes under the control of the NFE2L2 oxidative stress pathway (By similarity).</text>
</comment>
<comment type="subunit">
    <text>Heterodimer of BACH1 and MAFK.</text>
</comment>
<comment type="interaction">
    <interactant intactId="EBI-2552417">
        <id>P97302</id>
    </interactant>
    <interactant intactId="EBI-15740843">
        <id>Q61827</id>
        <label>Mafk</label>
    </interactant>
    <organismsDiffer>false</organismsDiffer>
    <experiments>5</experiments>
</comment>
<comment type="interaction">
    <interactant intactId="EBI-2552417">
        <id>P97302</id>
    </interactant>
    <interactant intactId="EBI-474016">
        <id>P02340</id>
        <label>Tp53</label>
    </interactant>
    <organismsDiffer>false</organismsDiffer>
    <experiments>4</experiments>
</comment>
<comment type="subcellular location">
    <subcellularLocation>
        <location evidence="3 6">Nucleus</location>
    </subcellularLocation>
</comment>
<comment type="tissue specificity">
    <text evidence="6">Ubiquitous.</text>
</comment>
<comment type="PTM">
    <text evidence="1">Ubiquitinated by the SCF(FBXL17) complex or by the by the SCF(FBXO22) complex, leading to its degradation by the proteasome. Under oxidative stress, reactive oxygen species covalently modify cysteine residues on the bZIP domain of BACH1 and release it from chromatin. If the BTB domain of BACH1 remains intact, its beta1-alpha6 degron is recognized by FBXO22, promoting its ubiquitination and degradation. If the structural integrity of the beta1-alpha6 degron is compromised, FBXL17 will transiently associate with the BACH1 BTB dimer and remodel it into stably bound monomer for ubiquitination and degradation.</text>
</comment>
<comment type="similarity">
    <text evidence="7">Belongs to the bZIP family. CNC subfamily.</text>
</comment>
<gene>
    <name type="primary">Bach1</name>
</gene>
<feature type="chain" id="PRO_0000076455" description="Transcription regulator protein BACH1">
    <location>
        <begin position="1"/>
        <end position="739"/>
    </location>
</feature>
<feature type="domain" description="BTB" evidence="2">
    <location>
        <begin position="34"/>
        <end position="100"/>
    </location>
</feature>
<feature type="domain" description="bZIP" evidence="3">
    <location>
        <begin position="560"/>
        <end position="623"/>
    </location>
</feature>
<feature type="region of interest" description="Disordered" evidence="4">
    <location>
        <begin position="287"/>
        <end position="321"/>
    </location>
</feature>
<feature type="region of interest" description="Disordered" evidence="4">
    <location>
        <begin position="344"/>
        <end position="391"/>
    </location>
</feature>
<feature type="region of interest" description="Basic motif" evidence="3">
    <location>
        <begin position="565"/>
        <end position="581"/>
    </location>
</feature>
<feature type="region of interest" description="Leucine-zipper" evidence="3">
    <location>
        <begin position="585"/>
        <end position="592"/>
    </location>
</feature>
<feature type="region of interest" description="Disordered" evidence="4">
    <location>
        <begin position="679"/>
        <end position="708"/>
    </location>
</feature>
<feature type="compositionally biased region" description="Basic and acidic residues" evidence="4">
    <location>
        <begin position="346"/>
        <end position="364"/>
    </location>
</feature>
<feature type="compositionally biased region" description="Basic and acidic residues" evidence="4">
    <location>
        <begin position="376"/>
        <end position="391"/>
    </location>
</feature>
<feature type="compositionally biased region" description="Low complexity" evidence="4">
    <location>
        <begin position="699"/>
        <end position="708"/>
    </location>
</feature>
<feature type="modified residue" description="Phosphoserine" evidence="1">
    <location>
        <position position="196"/>
    </location>
</feature>
<feature type="modified residue" description="Phosphoserine" evidence="8">
    <location>
        <position position="448"/>
    </location>
</feature>
<feature type="helix" evidence="9">
    <location>
        <begin position="16"/>
        <end position="30"/>
    </location>
</feature>
<feature type="strand" evidence="9">
    <location>
        <begin position="36"/>
        <end position="40"/>
    </location>
</feature>
<feature type="strand" evidence="9">
    <location>
        <begin position="43"/>
        <end position="47"/>
    </location>
</feature>
<feature type="helix" evidence="9">
    <location>
        <begin position="49"/>
        <end position="55"/>
    </location>
</feature>
<feature type="helix" evidence="9">
    <location>
        <begin position="57"/>
        <end position="63"/>
    </location>
</feature>
<feature type="strand" evidence="9">
    <location>
        <begin position="71"/>
        <end position="74"/>
    </location>
</feature>
<feature type="helix" evidence="9">
    <location>
        <begin position="81"/>
        <end position="93"/>
    </location>
</feature>
<feature type="turn" evidence="9">
    <location>
        <begin position="100"/>
        <end position="102"/>
    </location>
</feature>
<feature type="helix" evidence="9">
    <location>
        <begin position="103"/>
        <end position="113"/>
    </location>
</feature>
<feature type="helix" evidence="9">
    <location>
        <begin position="116"/>
        <end position="118"/>
    </location>
</feature>
<feature type="helix" evidence="9">
    <location>
        <begin position="119"/>
        <end position="125"/>
    </location>
</feature>
<dbReference type="EMBL" id="D86603">
    <property type="protein sequence ID" value="BAA13137.1"/>
    <property type="molecule type" value="mRNA"/>
</dbReference>
<dbReference type="EMBL" id="BC057894">
    <property type="protein sequence ID" value="AAH57894.1"/>
    <property type="molecule type" value="mRNA"/>
</dbReference>
<dbReference type="CCDS" id="CCDS28293.1"/>
<dbReference type="RefSeq" id="NP_031546.1">
    <property type="nucleotide sequence ID" value="NM_007520.2"/>
</dbReference>
<dbReference type="RefSeq" id="XP_006522942.1">
    <property type="nucleotide sequence ID" value="XM_006522879.4"/>
</dbReference>
<dbReference type="PDB" id="2Z8H">
    <property type="method" value="X-ray"/>
    <property type="resolution" value="2.50 A"/>
    <property type="chains" value="A=1-135"/>
</dbReference>
<dbReference type="PDBsum" id="2Z8H"/>
<dbReference type="SMR" id="P97302"/>
<dbReference type="BioGRID" id="198294">
    <property type="interactions" value="95"/>
</dbReference>
<dbReference type="DIP" id="DIP-46342N"/>
<dbReference type="FunCoup" id="P97302">
    <property type="interactions" value="2240"/>
</dbReference>
<dbReference type="IntAct" id="P97302">
    <property type="interactions" value="28"/>
</dbReference>
<dbReference type="STRING" id="10090.ENSMUSP00000026703"/>
<dbReference type="GlyGen" id="P97302">
    <property type="glycosylation" value="1 site"/>
</dbReference>
<dbReference type="iPTMnet" id="P97302"/>
<dbReference type="PhosphoSitePlus" id="P97302"/>
<dbReference type="jPOST" id="P97302"/>
<dbReference type="PaxDb" id="10090-ENSMUSP00000026703"/>
<dbReference type="PeptideAtlas" id="P97302"/>
<dbReference type="ProteomicsDB" id="277175"/>
<dbReference type="Pumba" id="P97302"/>
<dbReference type="Antibodypedia" id="920">
    <property type="antibodies" value="386 antibodies from 38 providers"/>
</dbReference>
<dbReference type="DNASU" id="12013"/>
<dbReference type="Ensembl" id="ENSMUST00000026703.6">
    <property type="protein sequence ID" value="ENSMUSP00000026703.6"/>
    <property type="gene ID" value="ENSMUSG00000025612.6"/>
</dbReference>
<dbReference type="GeneID" id="12013"/>
<dbReference type="KEGG" id="mmu:12013"/>
<dbReference type="UCSC" id="uc007zup.1">
    <property type="organism name" value="mouse"/>
</dbReference>
<dbReference type="AGR" id="MGI:894680"/>
<dbReference type="CTD" id="571"/>
<dbReference type="MGI" id="MGI:894680">
    <property type="gene designation" value="Bach1"/>
</dbReference>
<dbReference type="VEuPathDB" id="HostDB:ENSMUSG00000025612"/>
<dbReference type="eggNOG" id="KOG3863">
    <property type="taxonomic scope" value="Eukaryota"/>
</dbReference>
<dbReference type="GeneTree" id="ENSGT00940000158923"/>
<dbReference type="HOGENOM" id="CLU_015243_2_0_1"/>
<dbReference type="InParanoid" id="P97302"/>
<dbReference type="OMA" id="RRSECPW"/>
<dbReference type="OrthoDB" id="6365358at2759"/>
<dbReference type="PhylomeDB" id="P97302"/>
<dbReference type="TreeFam" id="TF326681"/>
<dbReference type="Reactome" id="R-MMU-9707616">
    <property type="pathway name" value="Heme signaling"/>
</dbReference>
<dbReference type="Reactome" id="R-MMU-9708530">
    <property type="pathway name" value="Regulation of BACH1 activity"/>
</dbReference>
<dbReference type="BioGRID-ORCS" id="12013">
    <property type="hits" value="2 hits in 114 CRISPR screens"/>
</dbReference>
<dbReference type="ChiTaRS" id="Bach1">
    <property type="organism name" value="mouse"/>
</dbReference>
<dbReference type="EvolutionaryTrace" id="P97302"/>
<dbReference type="PRO" id="PR:P97302"/>
<dbReference type="Proteomes" id="UP000000589">
    <property type="component" value="Chromosome 16"/>
</dbReference>
<dbReference type="RNAct" id="P97302">
    <property type="molecule type" value="protein"/>
</dbReference>
<dbReference type="Bgee" id="ENSMUSG00000025612">
    <property type="expression patterns" value="Expressed in indifferent gonad and 283 other cell types or tissues"/>
</dbReference>
<dbReference type="ExpressionAtlas" id="P97302">
    <property type="expression patterns" value="baseline and differential"/>
</dbReference>
<dbReference type="GO" id="GO:0005634">
    <property type="term" value="C:nucleus"/>
    <property type="evidence" value="ECO:0000314"/>
    <property type="project" value="MGI"/>
</dbReference>
<dbReference type="GO" id="GO:0090575">
    <property type="term" value="C:RNA polymerase II transcription regulator complex"/>
    <property type="evidence" value="ECO:0007669"/>
    <property type="project" value="Ensembl"/>
</dbReference>
<dbReference type="GO" id="GO:0003677">
    <property type="term" value="F:DNA binding"/>
    <property type="evidence" value="ECO:0000314"/>
    <property type="project" value="MGI"/>
</dbReference>
<dbReference type="GO" id="GO:0001228">
    <property type="term" value="F:DNA-binding transcription activator activity, RNA polymerase II-specific"/>
    <property type="evidence" value="ECO:0000314"/>
    <property type="project" value="NTNU_SB"/>
</dbReference>
<dbReference type="GO" id="GO:0003700">
    <property type="term" value="F:DNA-binding transcription factor activity"/>
    <property type="evidence" value="ECO:0000314"/>
    <property type="project" value="UniProtKB"/>
</dbReference>
<dbReference type="GO" id="GO:0001227">
    <property type="term" value="F:DNA-binding transcription repressor activity, RNA polymerase II-specific"/>
    <property type="evidence" value="ECO:0000314"/>
    <property type="project" value="NTNU_SB"/>
</dbReference>
<dbReference type="GO" id="GO:0098531">
    <property type="term" value="F:ligand-modulated transcription factor activity"/>
    <property type="evidence" value="ECO:0007669"/>
    <property type="project" value="Ensembl"/>
</dbReference>
<dbReference type="GO" id="GO:0000978">
    <property type="term" value="F:RNA polymerase II cis-regulatory region sequence-specific DNA binding"/>
    <property type="evidence" value="ECO:0000314"/>
    <property type="project" value="NTNU_SB"/>
</dbReference>
<dbReference type="GO" id="GO:0006281">
    <property type="term" value="P:DNA repair"/>
    <property type="evidence" value="ECO:0007669"/>
    <property type="project" value="Ensembl"/>
</dbReference>
<dbReference type="GO" id="GO:0000122">
    <property type="term" value="P:negative regulation of transcription by RNA polymerase II"/>
    <property type="evidence" value="ECO:0000314"/>
    <property type="project" value="NTNU_SB"/>
</dbReference>
<dbReference type="GO" id="GO:0045944">
    <property type="term" value="P:positive regulation of transcription by RNA polymerase II"/>
    <property type="evidence" value="ECO:0000314"/>
    <property type="project" value="NTNU_SB"/>
</dbReference>
<dbReference type="GO" id="GO:0006355">
    <property type="term" value="P:regulation of DNA-templated transcription"/>
    <property type="evidence" value="ECO:0000314"/>
    <property type="project" value="UniProtKB"/>
</dbReference>
<dbReference type="CDD" id="cd18277">
    <property type="entry name" value="BTB_POZ_BACH1"/>
    <property type="match status" value="1"/>
</dbReference>
<dbReference type="CDD" id="cd14719">
    <property type="entry name" value="bZIP_BACH"/>
    <property type="match status" value="1"/>
</dbReference>
<dbReference type="FunFam" id="1.10.880.10:FF:000002">
    <property type="entry name" value="transcription regulator protein BACH2 isoform X1"/>
    <property type="match status" value="1"/>
</dbReference>
<dbReference type="FunFam" id="3.30.710.10:FF:000033">
    <property type="entry name" value="transcription regulator protein BACH2 isoform X1"/>
    <property type="match status" value="1"/>
</dbReference>
<dbReference type="Gene3D" id="3.30.710.10">
    <property type="entry name" value="Potassium Channel Kv1.1, Chain A"/>
    <property type="match status" value="1"/>
</dbReference>
<dbReference type="Gene3D" id="1.10.880.10">
    <property type="entry name" value="Transcription factor, Skn-1-like, DNA-binding domain"/>
    <property type="match status" value="1"/>
</dbReference>
<dbReference type="InterPro" id="IPR000210">
    <property type="entry name" value="BTB/POZ_dom"/>
</dbReference>
<dbReference type="InterPro" id="IPR004827">
    <property type="entry name" value="bZIP"/>
</dbReference>
<dbReference type="InterPro" id="IPR043321">
    <property type="entry name" value="bZIP_BACH"/>
</dbReference>
<dbReference type="InterPro" id="IPR004826">
    <property type="entry name" value="bZIP_Maf"/>
</dbReference>
<dbReference type="InterPro" id="IPR046347">
    <property type="entry name" value="bZIP_sf"/>
</dbReference>
<dbReference type="InterPro" id="IPR011333">
    <property type="entry name" value="SKP1/BTB/POZ_sf"/>
</dbReference>
<dbReference type="InterPro" id="IPR008917">
    <property type="entry name" value="TF_DNA-bd_sf"/>
</dbReference>
<dbReference type="InterPro" id="IPR050457">
    <property type="entry name" value="ZnFinger_BTB_dom_contain"/>
</dbReference>
<dbReference type="PANTHER" id="PTHR46105">
    <property type="entry name" value="AGAP004733-PA"/>
    <property type="match status" value="1"/>
</dbReference>
<dbReference type="PANTHER" id="PTHR46105:SF1">
    <property type="entry name" value="TRANSCRIPTION REGULATOR PROTEIN BACH1"/>
    <property type="match status" value="1"/>
</dbReference>
<dbReference type="Pfam" id="PF00651">
    <property type="entry name" value="BTB"/>
    <property type="match status" value="1"/>
</dbReference>
<dbReference type="Pfam" id="PF03131">
    <property type="entry name" value="bZIP_Maf"/>
    <property type="match status" value="1"/>
</dbReference>
<dbReference type="SMART" id="SM00338">
    <property type="entry name" value="BRLZ"/>
    <property type="match status" value="1"/>
</dbReference>
<dbReference type="SMART" id="SM00225">
    <property type="entry name" value="BTB"/>
    <property type="match status" value="1"/>
</dbReference>
<dbReference type="SUPFAM" id="SSF47454">
    <property type="entry name" value="A DNA-binding domain in eukaryotic transcription factors"/>
    <property type="match status" value="1"/>
</dbReference>
<dbReference type="SUPFAM" id="SSF57959">
    <property type="entry name" value="Leucine zipper domain"/>
    <property type="match status" value="1"/>
</dbReference>
<dbReference type="SUPFAM" id="SSF54695">
    <property type="entry name" value="POZ domain"/>
    <property type="match status" value="1"/>
</dbReference>
<dbReference type="PROSITE" id="PS50097">
    <property type="entry name" value="BTB"/>
    <property type="match status" value="1"/>
</dbReference>
<dbReference type="PROSITE" id="PS50217">
    <property type="entry name" value="BZIP"/>
    <property type="match status" value="1"/>
</dbReference>
<dbReference type="PROSITE" id="PS00036">
    <property type="entry name" value="BZIP_BASIC"/>
    <property type="match status" value="1"/>
</dbReference>
<keyword id="KW-0002">3D-structure</keyword>
<keyword id="KW-0010">Activator</keyword>
<keyword id="KW-0238">DNA-binding</keyword>
<keyword id="KW-0539">Nucleus</keyword>
<keyword id="KW-0597">Phosphoprotein</keyword>
<keyword id="KW-1185">Reference proteome</keyword>
<keyword id="KW-0678">Repressor</keyword>
<keyword id="KW-0804">Transcription</keyword>
<keyword id="KW-0805">Transcription regulation</keyword>
<keyword id="KW-0832">Ubl conjugation</keyword>
<proteinExistence type="evidence at protein level"/>
<reference key="1">
    <citation type="journal article" date="1996" name="Mol. Cell. Biol.">
        <title>Bach proteins belong to a novel family of BTB-basic leucine zipper transcription factors that interact with MafK and regulate transcription through the NF-E2 site.</title>
        <authorList>
            <person name="Oyake T."/>
            <person name="Itoh K."/>
            <person name="Motohashi H."/>
            <person name="Hayashi N."/>
            <person name="Hoshino H."/>
            <person name="Nishizawa M."/>
            <person name="Yamamoto M."/>
            <person name="Igarashi K."/>
        </authorList>
    </citation>
    <scope>NUCLEOTIDE SEQUENCE [MRNA]</scope>
    <scope>FUNCTION</scope>
    <scope>SUBCELLULAR LOCATION</scope>
    <scope>INTERACTION WITH MAFK</scope>
    <scope>TISSUE SPECIFICITY</scope>
    <source>
        <strain>BALB/cJ</strain>
    </source>
</reference>
<reference key="2">
    <citation type="journal article" date="2004" name="Genome Res.">
        <title>The status, quality, and expansion of the NIH full-length cDNA project: the Mammalian Gene Collection (MGC).</title>
        <authorList>
            <consortium name="The MGC Project Team"/>
        </authorList>
    </citation>
    <scope>NUCLEOTIDE SEQUENCE [LARGE SCALE MRNA]</scope>
    <source>
        <strain>NMRI</strain>
        <tissue>Mammary gland</tissue>
    </source>
</reference>
<reference key="3">
    <citation type="journal article" date="2010" name="Cell">
        <title>A tissue-specific atlas of mouse protein phosphorylation and expression.</title>
        <authorList>
            <person name="Huttlin E.L."/>
            <person name="Jedrychowski M.P."/>
            <person name="Elias J.E."/>
            <person name="Goswami T."/>
            <person name="Rad R."/>
            <person name="Beausoleil S.A."/>
            <person name="Villen J."/>
            <person name="Haas W."/>
            <person name="Sowa M.E."/>
            <person name="Gygi S.P."/>
        </authorList>
    </citation>
    <scope>PHOSPHORYLATION [LARGE SCALE ANALYSIS] AT SER-448</scope>
    <scope>IDENTIFICATION BY MASS SPECTROMETRY [LARGE SCALE ANALYSIS]</scope>
    <source>
        <tissue>Kidney</tissue>
        <tissue>Spleen</tissue>
    </source>
</reference>
<reference key="4">
    <citation type="journal article" date="2009" name="Genes Cells">
        <title>Crystal structure of the Bach1 BTB domain and its regulation of homodimerization.</title>
        <authorList>
            <person name="Ito N."/>
            <person name="Watanabe-Matsui M."/>
            <person name="Igarashi K."/>
            <person name="Murayama K."/>
        </authorList>
    </citation>
    <scope>X-RAY CRYSTALLOGRAPHY (2.5 ANGSTROMS) OF 1-135</scope>
    <scope>FUNCTION</scope>
</reference>
<protein>
    <recommendedName>
        <fullName>Transcription regulator protein BACH1</fullName>
    </recommendedName>
    <alternativeName>
        <fullName>BTB and CNC homolog 1</fullName>
    </alternativeName>
</protein>